<sequence>MALFRALYIIWVFLLIPLSNAEEFTPKVTRTLSRYVFDIVNFDDSNTLIRAEEDSVEISFDAGENWKTIDEIEEPIESFVVDPFRGHDRAFAFVKTAPKFYVTDDQGKSWRPLTIPISEKASNYFCDVTTHPIKKKHLIIRCDLLTIKNSGLMYVGREIYTTNDGVSFSQVKPSFGKIDGHISTARCDFIKSSEDSDLGGNDASILCLFRNTEYIESTGSTIDKSELILSADGGETFKELVQFKDKVVSRYEILKHHVIVLTQDDMYNEMSSTNIWISNDVSTFQVARTPTKIRHVNMGQIHEDSIGRIVLPVSRERDDEDSNQPGAAEVLISDSEGLKFLPINWIPNNQFGYINVAYPGFLKGTFFGSFHPFIEYSDRKRKYSRQKVREETKVSVDNGLTWTNLKVVDRENVDLFGCDVTKPERCSLQTHFYDLRNLNPSAGIMMISGIVGDGSAYNWKEEKTFISRDSGLTWRLVHNSTGLYTTGDLGNIIMYIPYRSNENGDVPSKFYYSLDQGKTWGEYDLIMPIYPYRLVSTISDGSGSKFILTGTSITEDPIFITYSIDFSAVFDYKSCEEGDFEDWNLADGKCVNGAKYKYRRRKQDAQCLVKKAFKDLSLDETPCNSCTGSDYECSFEFVRDAKGDCIPDYNLIALSDICDKSKGKSVLVKPLQLIKGDKCKTPMKIESVDIPCDEIPKEGSSDKEIVTTENKFDFEIKFYQYFDTVADESLVMLNSIGDAYISHDGGQTIKRFDTDGEKIVEIVFNPYFNSSAYLFGSKGNIFLTHDRGYSFMIAKLPEARQLGMPLDFSAKAQDTFIYYGGKNCESILSPECHAVAYLTKDGGETFTEMLDNAIHCEFAGTLFKYPSNDDMVMCQVKEKFSQTRSLVSSTDFFQDDRKTVFENIIGYLSTGGYIIVAVPHEDNELRAYVTNDGAEFTEAKFPYDEDIGKQDAFTILGSEEGSIFLHLATNLESGHDFGNLLKSNSNGTSFVTLEHAVNRNTFGYVDFEKVQGLEGIIITNIVSNSEKVGENKEDEQLKTKITFNDGSDWNFLKPPKKDSEGKKFPCDSVSLDKCSLHLHGYTERKDIRDTYSSGSALGMMFGVGNVGDRLLPYEECSTFLTTDGGETWTEVKKGPHQWEYGDHGGVLVLVPENAETDSISYSTDFGKTWKDYKFCGDKVLVKDIITVPRDSALRFLLFGEAKNMGSGSFRTYTIDFRNIFERQCEFDITGRKRADFKYSPLGSRTGCLFGHKTEFLRKTDEKCFIGNIPLSEFSRNVKNCPCTRQDFECDYNFYKASDGTCKLVKGLSSANGADICKKEPDLIEYYDSSGYRKIPLSTCKGGLKLDAHLAPHPCPGKEKAFREKYSINTGAYALVFVTILLVIFFVAWFVYDRGIRRNGGFSRFEEIRLGDDGLIENNRTDRVVNIIVRLGLCISLITKSAFQRAKAGTAQLSSKFRARFGNKKGATYSSLLHDQLSDEPDGFHEDSNDLSSFRGQGSNSEIEQEDVDTSQQEHTLRTDLLGASNIPDALPARSASHESDLAAARSEDK</sequence>
<gene>
    <name type="primary">VTH1</name>
    <name type="ordered locus">YIL173W</name>
</gene>
<comment type="function">
    <text evidence="6 7">Functions as a sorting receptor in the Golgi compartment required for the intracellular sorting and delivery of soluble vacuolar proteins, like carboxypeptidase Y (CPY) and proteinase A.</text>
</comment>
<comment type="subcellular location">
    <subcellularLocation>
        <location evidence="1">Golgi apparatus</location>
        <location evidence="1">trans-Golgi network membrane</location>
        <topology evidence="1">Single-pass type I membrane protein</topology>
    </subcellularLocation>
    <subcellularLocation>
        <location evidence="4">Endosome membrane</location>
        <topology evidence="4">Single-pass type I membrane protein</topology>
    </subcellularLocation>
</comment>
<comment type="miscellaneous">
    <text evidence="5">Present with 319 molecules/cell in log phase SD medium.</text>
</comment>
<comment type="similarity">
    <text evidence="8">Belongs to the VPS10-related sortilin family.</text>
</comment>
<dbReference type="EMBL" id="Z46921">
    <property type="protein sequence ID" value="CAA87019.1"/>
    <property type="molecule type" value="Genomic_DNA"/>
</dbReference>
<dbReference type="EMBL" id="BK006942">
    <property type="protein sequence ID" value="DAA08384.1"/>
    <property type="molecule type" value="Genomic_DNA"/>
</dbReference>
<dbReference type="RefSeq" id="NP_012095.1">
    <property type="nucleotide sequence ID" value="NM_001179519.1"/>
</dbReference>
<dbReference type="SMR" id="P40438"/>
<dbReference type="BioGRID" id="34823">
    <property type="interactions" value="41"/>
</dbReference>
<dbReference type="DIP" id="DIP-841N"/>
<dbReference type="FunCoup" id="P40438">
    <property type="interactions" value="41"/>
</dbReference>
<dbReference type="IntAct" id="P40438">
    <property type="interactions" value="4"/>
</dbReference>
<dbReference type="MINT" id="P40438"/>
<dbReference type="STRING" id="4932.YIL173W"/>
<dbReference type="GlyCosmos" id="P40438">
    <property type="glycosylation" value="3 sites, No reported glycans"/>
</dbReference>
<dbReference type="GlyGen" id="P40438">
    <property type="glycosylation" value="3 sites"/>
</dbReference>
<dbReference type="iPTMnet" id="P40438"/>
<dbReference type="PaxDb" id="4932-YIL173W"/>
<dbReference type="PeptideAtlas" id="P40438"/>
<dbReference type="EnsemblFungi" id="YIL173W_mRNA">
    <property type="protein sequence ID" value="YIL173W"/>
    <property type="gene ID" value="YIL173W"/>
</dbReference>
<dbReference type="GeneID" id="854634"/>
<dbReference type="KEGG" id="sce:YIL173W"/>
<dbReference type="AGR" id="SGD:S000001435"/>
<dbReference type="SGD" id="S000001435">
    <property type="gene designation" value="VTH1"/>
</dbReference>
<dbReference type="VEuPathDB" id="FungiDB:YIL173W"/>
<dbReference type="eggNOG" id="KOG3511">
    <property type="taxonomic scope" value="Eukaryota"/>
</dbReference>
<dbReference type="GeneTree" id="ENSGT01030000234563"/>
<dbReference type="HOGENOM" id="CLU_000700_0_0_1"/>
<dbReference type="InParanoid" id="P40438"/>
<dbReference type="OMA" id="WIANQID"/>
<dbReference type="OrthoDB" id="443634at2759"/>
<dbReference type="BioCyc" id="YEAST:G3O-31417-MONOMER"/>
<dbReference type="PRO" id="PR:P40438"/>
<dbReference type="Proteomes" id="UP000002311">
    <property type="component" value="Chromosome IX"/>
</dbReference>
<dbReference type="RNAct" id="P40438">
    <property type="molecule type" value="protein"/>
</dbReference>
<dbReference type="GO" id="GO:0005829">
    <property type="term" value="C:cytosol"/>
    <property type="evidence" value="ECO:0007669"/>
    <property type="project" value="GOC"/>
</dbReference>
<dbReference type="GO" id="GO:0005768">
    <property type="term" value="C:endosome"/>
    <property type="evidence" value="ECO:0007005"/>
    <property type="project" value="SGD"/>
</dbReference>
<dbReference type="GO" id="GO:0010008">
    <property type="term" value="C:endosome membrane"/>
    <property type="evidence" value="ECO:0007669"/>
    <property type="project" value="UniProtKB-SubCell"/>
</dbReference>
<dbReference type="GO" id="GO:0000324">
    <property type="term" value="C:fungal-type vacuole"/>
    <property type="evidence" value="ECO:0007005"/>
    <property type="project" value="SGD"/>
</dbReference>
<dbReference type="GO" id="GO:0005794">
    <property type="term" value="C:Golgi apparatus"/>
    <property type="evidence" value="ECO:0000318"/>
    <property type="project" value="GO_Central"/>
</dbReference>
<dbReference type="GO" id="GO:0016020">
    <property type="term" value="C:membrane"/>
    <property type="evidence" value="ECO:0000318"/>
    <property type="project" value="GO_Central"/>
</dbReference>
<dbReference type="GO" id="GO:0000166">
    <property type="term" value="F:nucleotide binding"/>
    <property type="evidence" value="ECO:0007669"/>
    <property type="project" value="UniProtKB-KW"/>
</dbReference>
<dbReference type="GO" id="GO:0005048">
    <property type="term" value="F:signal sequence binding"/>
    <property type="evidence" value="ECO:0000316"/>
    <property type="project" value="SGD"/>
</dbReference>
<dbReference type="GO" id="GO:0006895">
    <property type="term" value="P:Golgi to endosome transport"/>
    <property type="evidence" value="ECO:0000318"/>
    <property type="project" value="GO_Central"/>
</dbReference>
<dbReference type="GO" id="GO:0006896">
    <property type="term" value="P:Golgi to vacuole transport"/>
    <property type="evidence" value="ECO:0000316"/>
    <property type="project" value="SGD"/>
</dbReference>
<dbReference type="GO" id="GO:0006623">
    <property type="term" value="P:protein targeting to vacuole"/>
    <property type="evidence" value="ECO:0000318"/>
    <property type="project" value="GO_Central"/>
</dbReference>
<dbReference type="CDD" id="cd15482">
    <property type="entry name" value="Sialidase_non-viral"/>
    <property type="match status" value="1"/>
</dbReference>
<dbReference type="FunFam" id="3.30.60.270:FF:000005">
    <property type="entry name" value="Sortilin"/>
    <property type="match status" value="1"/>
</dbReference>
<dbReference type="FunFam" id="3.30.60.270:FF:000008">
    <property type="entry name" value="Vacuolar protein sorting/targeting protein PEP1"/>
    <property type="match status" value="1"/>
</dbReference>
<dbReference type="FunFam" id="2.130.10.10:FF:000998">
    <property type="entry name" value="VPS10 homolog 2"/>
    <property type="match status" value="1"/>
</dbReference>
<dbReference type="FunFam" id="2.130.10.10:FF:002485">
    <property type="entry name" value="VPS10 homolog 2"/>
    <property type="match status" value="1"/>
</dbReference>
<dbReference type="Gene3D" id="2.10.70.80">
    <property type="match status" value="1"/>
</dbReference>
<dbReference type="Gene3D" id="2.120.10.10">
    <property type="match status" value="1"/>
</dbReference>
<dbReference type="Gene3D" id="3.30.60.270">
    <property type="match status" value="2"/>
</dbReference>
<dbReference type="Gene3D" id="2.130.10.10">
    <property type="entry name" value="YVTN repeat-like/Quinoprotein amine dehydrogenase"/>
    <property type="match status" value="2"/>
</dbReference>
<dbReference type="InterPro" id="IPR036278">
    <property type="entry name" value="Sialidase_sf"/>
</dbReference>
<dbReference type="InterPro" id="IPR031777">
    <property type="entry name" value="Sortilin_C"/>
</dbReference>
<dbReference type="InterPro" id="IPR031778">
    <property type="entry name" value="Sortilin_N"/>
</dbReference>
<dbReference type="InterPro" id="IPR006581">
    <property type="entry name" value="VPS10"/>
</dbReference>
<dbReference type="InterPro" id="IPR050310">
    <property type="entry name" value="VPS10-sortilin"/>
</dbReference>
<dbReference type="InterPro" id="IPR015943">
    <property type="entry name" value="WD40/YVTN_repeat-like_dom_sf"/>
</dbReference>
<dbReference type="PANTHER" id="PTHR12106">
    <property type="entry name" value="SORTILIN RELATED"/>
    <property type="match status" value="1"/>
</dbReference>
<dbReference type="PANTHER" id="PTHR12106:SF27">
    <property type="entry name" value="SORTILIN-RELATED RECEPTOR"/>
    <property type="match status" value="1"/>
</dbReference>
<dbReference type="Pfam" id="PF15902">
    <property type="entry name" value="Sortilin-Vps10"/>
    <property type="match status" value="2"/>
</dbReference>
<dbReference type="Pfam" id="PF15901">
    <property type="entry name" value="Sortilin_C"/>
    <property type="match status" value="2"/>
</dbReference>
<dbReference type="SMART" id="SM00602">
    <property type="entry name" value="VPS10"/>
    <property type="match status" value="2"/>
</dbReference>
<dbReference type="SUPFAM" id="SSF110296">
    <property type="entry name" value="Oligoxyloglucan reducing end-specific cellobiohydrolase"/>
    <property type="match status" value="1"/>
</dbReference>
<dbReference type="SUPFAM" id="SSF50939">
    <property type="entry name" value="Sialidases"/>
    <property type="match status" value="2"/>
</dbReference>
<accession>P40438</accession>
<accession>D6VVB8</accession>
<organism>
    <name type="scientific">Saccharomyces cerevisiae (strain ATCC 204508 / S288c)</name>
    <name type="common">Baker's yeast</name>
    <dbReference type="NCBI Taxonomy" id="559292"/>
    <lineage>
        <taxon>Eukaryota</taxon>
        <taxon>Fungi</taxon>
        <taxon>Dikarya</taxon>
        <taxon>Ascomycota</taxon>
        <taxon>Saccharomycotina</taxon>
        <taxon>Saccharomycetes</taxon>
        <taxon>Saccharomycetales</taxon>
        <taxon>Saccharomycetaceae</taxon>
        <taxon>Saccharomyces</taxon>
    </lineage>
</organism>
<reference key="1">
    <citation type="journal article" date="1997" name="Nature">
        <title>The nucleotide sequence of Saccharomyces cerevisiae chromosome IX.</title>
        <authorList>
            <person name="Churcher C.M."/>
            <person name="Bowman S."/>
            <person name="Badcock K."/>
            <person name="Bankier A.T."/>
            <person name="Brown D."/>
            <person name="Chillingworth T."/>
            <person name="Connor R."/>
            <person name="Devlin K."/>
            <person name="Gentles S."/>
            <person name="Hamlin N."/>
            <person name="Harris D.E."/>
            <person name="Horsnell T."/>
            <person name="Hunt S."/>
            <person name="Jagels K."/>
            <person name="Jones M."/>
            <person name="Lye G."/>
            <person name="Moule S."/>
            <person name="Odell C."/>
            <person name="Pearson D."/>
            <person name="Rajandream M.A."/>
            <person name="Rice P."/>
            <person name="Rowley N."/>
            <person name="Skelton J."/>
            <person name="Smith V."/>
            <person name="Walsh S.V."/>
            <person name="Whitehead S."/>
            <person name="Barrell B.G."/>
        </authorList>
    </citation>
    <scope>NUCLEOTIDE SEQUENCE [LARGE SCALE GENOMIC DNA]</scope>
    <source>
        <strain>ATCC 204508 / S288c</strain>
    </source>
</reference>
<reference key="2">
    <citation type="journal article" date="2014" name="G3 (Bethesda)">
        <title>The reference genome sequence of Saccharomyces cerevisiae: Then and now.</title>
        <authorList>
            <person name="Engel S.R."/>
            <person name="Dietrich F.S."/>
            <person name="Fisk D.G."/>
            <person name="Binkley G."/>
            <person name="Balakrishnan R."/>
            <person name="Costanzo M.C."/>
            <person name="Dwight S.S."/>
            <person name="Hitz B.C."/>
            <person name="Karra K."/>
            <person name="Nash R.S."/>
            <person name="Weng S."/>
            <person name="Wong E.D."/>
            <person name="Lloyd P."/>
            <person name="Skrzypek M.S."/>
            <person name="Miyasato S.R."/>
            <person name="Simison M."/>
            <person name="Cherry J.M."/>
        </authorList>
    </citation>
    <scope>GENOME REANNOTATION</scope>
    <source>
        <strain>ATCC 204508 / S288c</strain>
    </source>
</reference>
<reference key="3">
    <citation type="journal article" date="1996" name="J. Biol. Chem.">
        <title>Multiple pathways for vacuolar sorting of yeast proteinase A.</title>
        <authorList>
            <person name="Westphal V."/>
            <person name="Marcusson E.G."/>
            <person name="Winther J.R."/>
            <person name="Emr S.D."/>
            <person name="van den Hazel H.B."/>
        </authorList>
    </citation>
    <scope>FUNCTION</scope>
</reference>
<reference key="4">
    <citation type="journal article" date="1996" name="J. Cell Biol.">
        <title>Vps10p cycles between the late-Golgi and prevacuolar compartments in its function as the sorting receptor for multiple yeast vacuolar hydrolases.</title>
        <authorList>
            <person name="Cooper A.A."/>
            <person name="Stevens T.H."/>
        </authorList>
    </citation>
    <scope>FUNCTION</scope>
</reference>
<reference key="5">
    <citation type="journal article" date="2003" name="Nature">
        <title>Global analysis of protein localization in budding yeast.</title>
        <authorList>
            <person name="Huh W.-K."/>
            <person name="Falvo J.V."/>
            <person name="Gerke L.C."/>
            <person name="Carroll A.S."/>
            <person name="Howson R.W."/>
            <person name="Weissman J.S."/>
            <person name="O'Shea E.K."/>
        </authorList>
    </citation>
    <scope>SUBCELLULAR LOCATION [LARGE SCALE ANALYSIS]</scope>
</reference>
<reference key="6">
    <citation type="journal article" date="2003" name="Nature">
        <title>Global analysis of protein expression in yeast.</title>
        <authorList>
            <person name="Ghaemmaghami S."/>
            <person name="Huh W.-K."/>
            <person name="Bower K."/>
            <person name="Howson R.W."/>
            <person name="Belle A."/>
            <person name="Dephoure N."/>
            <person name="O'Shea E.K."/>
            <person name="Weissman J.S."/>
        </authorList>
    </citation>
    <scope>LEVEL OF PROTEIN EXPRESSION [LARGE SCALE ANALYSIS]</scope>
</reference>
<evidence type="ECO:0000250" key="1"/>
<evidence type="ECO:0000255" key="2"/>
<evidence type="ECO:0000256" key="3">
    <source>
        <dbReference type="SAM" id="MobiDB-lite"/>
    </source>
</evidence>
<evidence type="ECO:0000269" key="4">
    <source>
    </source>
</evidence>
<evidence type="ECO:0000269" key="5">
    <source>
    </source>
</evidence>
<evidence type="ECO:0000269" key="6">
    <source>
    </source>
</evidence>
<evidence type="ECO:0000269" key="7">
    <source>
    </source>
</evidence>
<evidence type="ECO:0000305" key="8"/>
<proteinExistence type="evidence at protein level"/>
<feature type="signal peptide" evidence="2">
    <location>
        <begin position="1"/>
        <end position="21"/>
    </location>
</feature>
<feature type="chain" id="PRO_0000014329" description="VPS10 homolog 1">
    <location>
        <begin position="22"/>
        <end position="1549"/>
    </location>
</feature>
<feature type="topological domain" description="Lumenal" evidence="2">
    <location>
        <begin position="22"/>
        <end position="1369"/>
    </location>
</feature>
<feature type="transmembrane region" description="Helical" evidence="2">
    <location>
        <begin position="1370"/>
        <end position="1390"/>
    </location>
</feature>
<feature type="topological domain" description="Cytoplasmic" evidence="2">
    <location>
        <begin position="1391"/>
        <end position="1549"/>
    </location>
</feature>
<feature type="repeat" description="BNR 1">
    <location>
        <begin position="57"/>
        <end position="68"/>
    </location>
</feature>
<feature type="repeat" description="BNR 2">
    <location>
        <begin position="101"/>
        <end position="112"/>
    </location>
</feature>
<feature type="repeat" description="BNR 3">
    <location>
        <begin position="159"/>
        <end position="170"/>
    </location>
</feature>
<feature type="repeat" description="BNR 4">
    <location>
        <begin position="228"/>
        <end position="239"/>
    </location>
</feature>
<feature type="repeat" description="BNR 5">
    <location>
        <begin position="393"/>
        <end position="404"/>
    </location>
</feature>
<feature type="repeat" description="BNR 6">
    <location>
        <begin position="465"/>
        <end position="476"/>
    </location>
</feature>
<feature type="repeat" description="BNR 7">
    <location>
        <begin position="511"/>
        <end position="522"/>
    </location>
</feature>
<feature type="repeat" description="BNR 8">
    <location>
        <begin position="740"/>
        <end position="751"/>
    </location>
</feature>
<feature type="repeat" description="BNR 9">
    <location>
        <begin position="837"/>
        <end position="848"/>
    </location>
</feature>
<feature type="repeat" description="BNR 10">
    <location>
        <begin position="1040"/>
        <end position="1051"/>
    </location>
</feature>
<feature type="repeat" description="BNR 11">
    <location>
        <begin position="1119"/>
        <end position="1130"/>
    </location>
</feature>
<feature type="repeat" description="BNR 12">
    <location>
        <begin position="1160"/>
        <end position="1171"/>
    </location>
</feature>
<feature type="region of interest" description="Disordered" evidence="3">
    <location>
        <begin position="1479"/>
        <end position="1549"/>
    </location>
</feature>
<feature type="compositionally biased region" description="Polar residues" evidence="3">
    <location>
        <begin position="1489"/>
        <end position="1501"/>
    </location>
</feature>
<feature type="compositionally biased region" description="Basic and acidic residues" evidence="3">
    <location>
        <begin position="1535"/>
        <end position="1549"/>
    </location>
</feature>
<feature type="glycosylation site" description="N-linked (GlcNAc...) asparagine" evidence="2">
    <location>
        <position position="479"/>
    </location>
</feature>
<feature type="glycosylation site" description="N-linked (GlcNAc...) asparagine" evidence="2">
    <location>
        <position position="769"/>
    </location>
</feature>
<feature type="glycosylation site" description="N-linked (GlcNAc...) asparagine" evidence="2">
    <location>
        <position position="986"/>
    </location>
</feature>
<keyword id="KW-0967">Endosome</keyword>
<keyword id="KW-0325">Glycoprotein</keyword>
<keyword id="KW-0333">Golgi apparatus</keyword>
<keyword id="KW-0472">Membrane</keyword>
<keyword id="KW-0547">Nucleotide-binding</keyword>
<keyword id="KW-0653">Protein transport</keyword>
<keyword id="KW-0675">Receptor</keyword>
<keyword id="KW-1185">Reference proteome</keyword>
<keyword id="KW-0677">Repeat</keyword>
<keyword id="KW-0732">Signal</keyword>
<keyword id="KW-0812">Transmembrane</keyword>
<keyword id="KW-1133">Transmembrane helix</keyword>
<keyword id="KW-0813">Transport</keyword>
<protein>
    <recommendedName>
        <fullName>VPS10 homolog 1</fullName>
    </recommendedName>
    <alternativeName>
        <fullName>Sortilin VTH1</fullName>
    </alternativeName>
</protein>
<name>VTH1_YEAST</name>